<accession>Q83ES8</accession>
<protein>
    <recommendedName>
        <fullName evidence="1">Small ribosomal subunit protein uS7</fullName>
    </recommendedName>
    <alternativeName>
        <fullName evidence="3">30S ribosomal protein S7</fullName>
    </alternativeName>
</protein>
<reference key="1">
    <citation type="journal article" date="2003" name="Proc. Natl. Acad. Sci. U.S.A.">
        <title>Complete genome sequence of the Q-fever pathogen, Coxiella burnetii.</title>
        <authorList>
            <person name="Seshadri R."/>
            <person name="Paulsen I.T."/>
            <person name="Eisen J.A."/>
            <person name="Read T.D."/>
            <person name="Nelson K.E."/>
            <person name="Nelson W.C."/>
            <person name="Ward N.L."/>
            <person name="Tettelin H."/>
            <person name="Davidsen T.M."/>
            <person name="Beanan M.J."/>
            <person name="DeBoy R.T."/>
            <person name="Daugherty S.C."/>
            <person name="Brinkac L.M."/>
            <person name="Madupu R."/>
            <person name="Dodson R.J."/>
            <person name="Khouri H.M."/>
            <person name="Lee K.H."/>
            <person name="Carty H.A."/>
            <person name="Scanlan D."/>
            <person name="Heinzen R.A."/>
            <person name="Thompson H.A."/>
            <person name="Samuel J.E."/>
            <person name="Fraser C.M."/>
            <person name="Heidelberg J.F."/>
        </authorList>
    </citation>
    <scope>NUCLEOTIDE SEQUENCE [LARGE SCALE GENOMIC DNA]</scope>
    <source>
        <strain>RSA 493 / Nine Mile phase I</strain>
    </source>
</reference>
<organism>
    <name type="scientific">Coxiella burnetii (strain RSA 493 / Nine Mile phase I)</name>
    <dbReference type="NCBI Taxonomy" id="227377"/>
    <lineage>
        <taxon>Bacteria</taxon>
        <taxon>Pseudomonadati</taxon>
        <taxon>Pseudomonadota</taxon>
        <taxon>Gammaproteobacteria</taxon>
        <taxon>Legionellales</taxon>
        <taxon>Coxiellaceae</taxon>
        <taxon>Coxiella</taxon>
    </lineage>
</organism>
<gene>
    <name evidence="1" type="primary">rpsG</name>
    <name type="ordered locus">CBU_0234</name>
</gene>
<name>RS7_COXBU</name>
<keyword id="KW-1185">Reference proteome</keyword>
<keyword id="KW-0687">Ribonucleoprotein</keyword>
<keyword id="KW-0689">Ribosomal protein</keyword>
<keyword id="KW-0694">RNA-binding</keyword>
<keyword id="KW-0699">rRNA-binding</keyword>
<keyword id="KW-0820">tRNA-binding</keyword>
<feature type="chain" id="PRO_0000124255" description="Small ribosomal subunit protein uS7">
    <location>
        <begin position="1"/>
        <end position="191"/>
    </location>
</feature>
<feature type="region of interest" description="Disordered" evidence="2">
    <location>
        <begin position="56"/>
        <end position="80"/>
    </location>
</feature>
<comment type="function">
    <text evidence="1">One of the primary rRNA binding proteins, it binds directly to 16S rRNA where it nucleates assembly of the head domain of the 30S subunit. Is located at the subunit interface close to the decoding center, probably blocks exit of the E-site tRNA.</text>
</comment>
<comment type="subunit">
    <text evidence="1">Part of the 30S ribosomal subunit. Contacts proteins S9 and S11.</text>
</comment>
<comment type="similarity">
    <text evidence="1">Belongs to the universal ribosomal protein uS7 family.</text>
</comment>
<dbReference type="EMBL" id="AE016828">
    <property type="protein sequence ID" value="AAO89792.1"/>
    <property type="molecule type" value="Genomic_DNA"/>
</dbReference>
<dbReference type="RefSeq" id="NP_819278.1">
    <property type="nucleotide sequence ID" value="NC_002971.4"/>
</dbReference>
<dbReference type="RefSeq" id="WP_010957450.1">
    <property type="nucleotide sequence ID" value="NC_002971.4"/>
</dbReference>
<dbReference type="SMR" id="Q83ES8"/>
<dbReference type="STRING" id="227377.CBU_0234"/>
<dbReference type="DNASU" id="1208115"/>
<dbReference type="EnsemblBacteria" id="AAO89792">
    <property type="protein sequence ID" value="AAO89792"/>
    <property type="gene ID" value="CBU_0234"/>
</dbReference>
<dbReference type="GeneID" id="1208115"/>
<dbReference type="KEGG" id="cbu:CBU_0234"/>
<dbReference type="PATRIC" id="fig|227377.7.peg.229"/>
<dbReference type="eggNOG" id="COG0049">
    <property type="taxonomic scope" value="Bacteria"/>
</dbReference>
<dbReference type="HOGENOM" id="CLU_072226_1_1_6"/>
<dbReference type="OrthoDB" id="9807653at2"/>
<dbReference type="Proteomes" id="UP000002671">
    <property type="component" value="Chromosome"/>
</dbReference>
<dbReference type="GO" id="GO:0022627">
    <property type="term" value="C:cytosolic small ribosomal subunit"/>
    <property type="evidence" value="ECO:0000318"/>
    <property type="project" value="GO_Central"/>
</dbReference>
<dbReference type="GO" id="GO:0005840">
    <property type="term" value="C:ribosome"/>
    <property type="evidence" value="ECO:0000318"/>
    <property type="project" value="GO_Central"/>
</dbReference>
<dbReference type="GO" id="GO:0003729">
    <property type="term" value="F:mRNA binding"/>
    <property type="evidence" value="ECO:0000318"/>
    <property type="project" value="GO_Central"/>
</dbReference>
<dbReference type="GO" id="GO:0019843">
    <property type="term" value="F:rRNA binding"/>
    <property type="evidence" value="ECO:0000318"/>
    <property type="project" value="GO_Central"/>
</dbReference>
<dbReference type="GO" id="GO:0003735">
    <property type="term" value="F:structural constituent of ribosome"/>
    <property type="evidence" value="ECO:0000318"/>
    <property type="project" value="GO_Central"/>
</dbReference>
<dbReference type="GO" id="GO:0000049">
    <property type="term" value="F:tRNA binding"/>
    <property type="evidence" value="ECO:0007669"/>
    <property type="project" value="UniProtKB-UniRule"/>
</dbReference>
<dbReference type="GO" id="GO:0000028">
    <property type="term" value="P:ribosomal small subunit assembly"/>
    <property type="evidence" value="ECO:0000318"/>
    <property type="project" value="GO_Central"/>
</dbReference>
<dbReference type="GO" id="GO:0006412">
    <property type="term" value="P:translation"/>
    <property type="evidence" value="ECO:0000318"/>
    <property type="project" value="GO_Central"/>
</dbReference>
<dbReference type="CDD" id="cd14869">
    <property type="entry name" value="uS7_Bacteria"/>
    <property type="match status" value="1"/>
</dbReference>
<dbReference type="Gene3D" id="1.10.455.10">
    <property type="entry name" value="Ribosomal protein S7 domain"/>
    <property type="match status" value="1"/>
</dbReference>
<dbReference type="HAMAP" id="MF_00480_B">
    <property type="entry name" value="Ribosomal_uS7_B"/>
    <property type="match status" value="1"/>
</dbReference>
<dbReference type="InterPro" id="IPR000235">
    <property type="entry name" value="Ribosomal_uS7"/>
</dbReference>
<dbReference type="InterPro" id="IPR005717">
    <property type="entry name" value="Ribosomal_uS7_bac/org-type"/>
</dbReference>
<dbReference type="InterPro" id="IPR020606">
    <property type="entry name" value="Ribosomal_uS7_CS"/>
</dbReference>
<dbReference type="InterPro" id="IPR023798">
    <property type="entry name" value="Ribosomal_uS7_dom"/>
</dbReference>
<dbReference type="InterPro" id="IPR036823">
    <property type="entry name" value="Ribosomal_uS7_dom_sf"/>
</dbReference>
<dbReference type="NCBIfam" id="TIGR01029">
    <property type="entry name" value="rpsG_bact"/>
    <property type="match status" value="1"/>
</dbReference>
<dbReference type="PANTHER" id="PTHR11205">
    <property type="entry name" value="RIBOSOMAL PROTEIN S7"/>
    <property type="match status" value="1"/>
</dbReference>
<dbReference type="Pfam" id="PF00177">
    <property type="entry name" value="Ribosomal_S7"/>
    <property type="match status" value="1"/>
</dbReference>
<dbReference type="PIRSF" id="PIRSF002122">
    <property type="entry name" value="RPS7p_RPS7a_RPS5e_RPS7o"/>
    <property type="match status" value="1"/>
</dbReference>
<dbReference type="SUPFAM" id="SSF47973">
    <property type="entry name" value="Ribosomal protein S7"/>
    <property type="match status" value="1"/>
</dbReference>
<dbReference type="PROSITE" id="PS00052">
    <property type="entry name" value="RIBOSOMAL_S7"/>
    <property type="match status" value="1"/>
</dbReference>
<proteinExistence type="inferred from homology"/>
<evidence type="ECO:0000255" key="1">
    <source>
        <dbReference type="HAMAP-Rule" id="MF_00480"/>
    </source>
</evidence>
<evidence type="ECO:0000256" key="2">
    <source>
        <dbReference type="SAM" id="MobiDB-lite"/>
    </source>
</evidence>
<evidence type="ECO:0000305" key="3"/>
<sequence>MARRKAAPKRETLPDPLFHSELLAKFINAVMRNGKKSVAEKIVYGALDVVAKRVQNKSGEQGDGDGESGGKAGGIKKRSLGDIRTDENARALALETFKGALDKVMPNVEVKSRRVGGSTYQVPVEIRMARRQALARRWLVEYANKRNEKTMVLRLAHEILDAVEGRGGAIKKREDVHRMAKANQAFAHYKW</sequence>